<gene>
    <name evidence="1" type="primary">atpC</name>
    <name type="ordered locus">BRADO0420</name>
</gene>
<evidence type="ECO:0000255" key="1">
    <source>
        <dbReference type="HAMAP-Rule" id="MF_00530"/>
    </source>
</evidence>
<sequence>MATFHFDLVSPEKIAFSGEVDQVDVPGQEGDFGVLAGHAPFVATLRPGILTVTTGGTQQKIIVLGGLAEISEKGLTILADVATSLKELDQTAFATEISGMEAKLNEKQGDELDRAIERLDHFKTIQQQLNTTALH</sequence>
<proteinExistence type="inferred from homology"/>
<reference key="1">
    <citation type="journal article" date="2007" name="Science">
        <title>Legumes symbioses: absence of nod genes in photosynthetic bradyrhizobia.</title>
        <authorList>
            <person name="Giraud E."/>
            <person name="Moulin L."/>
            <person name="Vallenet D."/>
            <person name="Barbe V."/>
            <person name="Cytryn E."/>
            <person name="Avarre J.-C."/>
            <person name="Jaubert M."/>
            <person name="Simon D."/>
            <person name="Cartieaux F."/>
            <person name="Prin Y."/>
            <person name="Bena G."/>
            <person name="Hannibal L."/>
            <person name="Fardoux J."/>
            <person name="Kojadinovic M."/>
            <person name="Vuillet L."/>
            <person name="Lajus A."/>
            <person name="Cruveiller S."/>
            <person name="Rouy Z."/>
            <person name="Mangenot S."/>
            <person name="Segurens B."/>
            <person name="Dossat C."/>
            <person name="Franck W.L."/>
            <person name="Chang W.-S."/>
            <person name="Saunders E."/>
            <person name="Bruce D."/>
            <person name="Richardson P."/>
            <person name="Normand P."/>
            <person name="Dreyfus B."/>
            <person name="Pignol D."/>
            <person name="Stacey G."/>
            <person name="Emerich D."/>
            <person name="Vermeglio A."/>
            <person name="Medigue C."/>
            <person name="Sadowsky M."/>
        </authorList>
    </citation>
    <scope>NUCLEOTIDE SEQUENCE [LARGE SCALE GENOMIC DNA]</scope>
    <source>
        <strain>ORS 278</strain>
    </source>
</reference>
<name>ATPE_BRASO</name>
<keyword id="KW-0066">ATP synthesis</keyword>
<keyword id="KW-0997">Cell inner membrane</keyword>
<keyword id="KW-1003">Cell membrane</keyword>
<keyword id="KW-0139">CF(1)</keyword>
<keyword id="KW-0375">Hydrogen ion transport</keyword>
<keyword id="KW-0406">Ion transport</keyword>
<keyword id="KW-0472">Membrane</keyword>
<keyword id="KW-1185">Reference proteome</keyword>
<keyword id="KW-0813">Transport</keyword>
<dbReference type="EMBL" id="CU234118">
    <property type="protein sequence ID" value="CAL74367.1"/>
    <property type="molecule type" value="Genomic_DNA"/>
</dbReference>
<dbReference type="RefSeq" id="WP_008961303.1">
    <property type="nucleotide sequence ID" value="NC_009445.1"/>
</dbReference>
<dbReference type="SMR" id="A4YKE1"/>
<dbReference type="STRING" id="114615.BRADO0420"/>
<dbReference type="KEGG" id="bra:BRADO0420"/>
<dbReference type="eggNOG" id="COG0355">
    <property type="taxonomic scope" value="Bacteria"/>
</dbReference>
<dbReference type="HOGENOM" id="CLU_084338_2_1_5"/>
<dbReference type="OrthoDB" id="9799969at2"/>
<dbReference type="Proteomes" id="UP000001994">
    <property type="component" value="Chromosome"/>
</dbReference>
<dbReference type="GO" id="GO:0005886">
    <property type="term" value="C:plasma membrane"/>
    <property type="evidence" value="ECO:0007669"/>
    <property type="project" value="UniProtKB-SubCell"/>
</dbReference>
<dbReference type="GO" id="GO:0045259">
    <property type="term" value="C:proton-transporting ATP synthase complex"/>
    <property type="evidence" value="ECO:0007669"/>
    <property type="project" value="UniProtKB-KW"/>
</dbReference>
<dbReference type="GO" id="GO:0005524">
    <property type="term" value="F:ATP binding"/>
    <property type="evidence" value="ECO:0007669"/>
    <property type="project" value="UniProtKB-UniRule"/>
</dbReference>
<dbReference type="GO" id="GO:0046933">
    <property type="term" value="F:proton-transporting ATP synthase activity, rotational mechanism"/>
    <property type="evidence" value="ECO:0007669"/>
    <property type="project" value="UniProtKB-UniRule"/>
</dbReference>
<dbReference type="CDD" id="cd12152">
    <property type="entry name" value="F1-ATPase_delta"/>
    <property type="match status" value="1"/>
</dbReference>
<dbReference type="Gene3D" id="2.60.15.10">
    <property type="entry name" value="F0F1 ATP synthase delta/epsilon subunit, N-terminal"/>
    <property type="match status" value="1"/>
</dbReference>
<dbReference type="HAMAP" id="MF_00530">
    <property type="entry name" value="ATP_synth_epsil_bac"/>
    <property type="match status" value="1"/>
</dbReference>
<dbReference type="InterPro" id="IPR001469">
    <property type="entry name" value="ATP_synth_F1_dsu/esu"/>
</dbReference>
<dbReference type="InterPro" id="IPR020546">
    <property type="entry name" value="ATP_synth_F1_dsu/esu_N"/>
</dbReference>
<dbReference type="InterPro" id="IPR036771">
    <property type="entry name" value="ATPsynth_dsu/esu_N"/>
</dbReference>
<dbReference type="NCBIfam" id="TIGR01216">
    <property type="entry name" value="ATP_synt_epsi"/>
    <property type="match status" value="1"/>
</dbReference>
<dbReference type="NCBIfam" id="NF009982">
    <property type="entry name" value="PRK13448.1"/>
    <property type="match status" value="1"/>
</dbReference>
<dbReference type="NCBIfam" id="NF009983">
    <property type="entry name" value="PRK13449.1"/>
    <property type="match status" value="1"/>
</dbReference>
<dbReference type="PANTHER" id="PTHR13822">
    <property type="entry name" value="ATP SYNTHASE DELTA/EPSILON CHAIN"/>
    <property type="match status" value="1"/>
</dbReference>
<dbReference type="PANTHER" id="PTHR13822:SF10">
    <property type="entry name" value="ATP SYNTHASE EPSILON CHAIN, CHLOROPLASTIC"/>
    <property type="match status" value="1"/>
</dbReference>
<dbReference type="Pfam" id="PF02823">
    <property type="entry name" value="ATP-synt_DE_N"/>
    <property type="match status" value="1"/>
</dbReference>
<dbReference type="SUPFAM" id="SSF51344">
    <property type="entry name" value="Epsilon subunit of F1F0-ATP synthase N-terminal domain"/>
    <property type="match status" value="1"/>
</dbReference>
<comment type="function">
    <text evidence="1">Produces ATP from ADP in the presence of a proton gradient across the membrane.</text>
</comment>
<comment type="subunit">
    <text evidence="1">F-type ATPases have 2 components, CF(1) - the catalytic core - and CF(0) - the membrane proton channel. CF(1) has five subunits: alpha(3), beta(3), gamma(1), delta(1), epsilon(1). CF(0) has three main subunits: a, b and c.</text>
</comment>
<comment type="subcellular location">
    <subcellularLocation>
        <location evidence="1">Cell inner membrane</location>
        <topology evidence="1">Peripheral membrane protein</topology>
    </subcellularLocation>
</comment>
<comment type="similarity">
    <text evidence="1">Belongs to the ATPase epsilon chain family.</text>
</comment>
<accession>A4YKE1</accession>
<protein>
    <recommendedName>
        <fullName evidence="1">ATP synthase epsilon chain</fullName>
    </recommendedName>
    <alternativeName>
        <fullName evidence="1">ATP synthase F1 sector epsilon subunit</fullName>
    </alternativeName>
    <alternativeName>
        <fullName evidence="1">F-ATPase epsilon subunit</fullName>
    </alternativeName>
</protein>
<organism>
    <name type="scientific">Bradyrhizobium sp. (strain ORS 278)</name>
    <dbReference type="NCBI Taxonomy" id="114615"/>
    <lineage>
        <taxon>Bacteria</taxon>
        <taxon>Pseudomonadati</taxon>
        <taxon>Pseudomonadota</taxon>
        <taxon>Alphaproteobacteria</taxon>
        <taxon>Hyphomicrobiales</taxon>
        <taxon>Nitrobacteraceae</taxon>
        <taxon>Bradyrhizobium</taxon>
    </lineage>
</organism>
<feature type="chain" id="PRO_1000056458" description="ATP synthase epsilon chain">
    <location>
        <begin position="1"/>
        <end position="135"/>
    </location>
</feature>